<gene>
    <name evidence="1" type="primary">xseA</name>
    <name type="ordered locus">RL0282</name>
</gene>
<protein>
    <recommendedName>
        <fullName evidence="1">Exodeoxyribonuclease 7 large subunit</fullName>
        <ecNumber evidence="1">3.1.11.6</ecNumber>
    </recommendedName>
    <alternativeName>
        <fullName evidence="1">Exodeoxyribonuclease VII large subunit</fullName>
        <shortName evidence="1">Exonuclease VII large subunit</shortName>
    </alternativeName>
</protein>
<dbReference type="EC" id="3.1.11.6" evidence="1"/>
<dbReference type="EMBL" id="AM236080">
    <property type="protein sequence ID" value="CAK05772.1"/>
    <property type="molecule type" value="Genomic_DNA"/>
</dbReference>
<dbReference type="RefSeq" id="WP_011650086.1">
    <property type="nucleotide sequence ID" value="NC_008380.1"/>
</dbReference>
<dbReference type="SMR" id="Q1MMN0"/>
<dbReference type="EnsemblBacteria" id="CAK05772">
    <property type="protein sequence ID" value="CAK05772"/>
    <property type="gene ID" value="RL0282"/>
</dbReference>
<dbReference type="KEGG" id="rle:RL0282"/>
<dbReference type="eggNOG" id="COG1570">
    <property type="taxonomic scope" value="Bacteria"/>
</dbReference>
<dbReference type="HOGENOM" id="CLU_023625_3_1_5"/>
<dbReference type="Proteomes" id="UP000006575">
    <property type="component" value="Chromosome"/>
</dbReference>
<dbReference type="GO" id="GO:0005737">
    <property type="term" value="C:cytoplasm"/>
    <property type="evidence" value="ECO:0007669"/>
    <property type="project" value="UniProtKB-SubCell"/>
</dbReference>
<dbReference type="GO" id="GO:0009318">
    <property type="term" value="C:exodeoxyribonuclease VII complex"/>
    <property type="evidence" value="ECO:0007669"/>
    <property type="project" value="InterPro"/>
</dbReference>
<dbReference type="GO" id="GO:0008855">
    <property type="term" value="F:exodeoxyribonuclease VII activity"/>
    <property type="evidence" value="ECO:0007669"/>
    <property type="project" value="UniProtKB-UniRule"/>
</dbReference>
<dbReference type="GO" id="GO:0003676">
    <property type="term" value="F:nucleic acid binding"/>
    <property type="evidence" value="ECO:0007669"/>
    <property type="project" value="InterPro"/>
</dbReference>
<dbReference type="GO" id="GO:0006308">
    <property type="term" value="P:DNA catabolic process"/>
    <property type="evidence" value="ECO:0007669"/>
    <property type="project" value="UniProtKB-UniRule"/>
</dbReference>
<dbReference type="CDD" id="cd04489">
    <property type="entry name" value="ExoVII_LU_OBF"/>
    <property type="match status" value="1"/>
</dbReference>
<dbReference type="HAMAP" id="MF_00378">
    <property type="entry name" value="Exonuc_7_L"/>
    <property type="match status" value="1"/>
</dbReference>
<dbReference type="InterPro" id="IPR003753">
    <property type="entry name" value="Exonuc_VII_L"/>
</dbReference>
<dbReference type="InterPro" id="IPR020579">
    <property type="entry name" value="Exonuc_VII_lsu_C"/>
</dbReference>
<dbReference type="InterPro" id="IPR025824">
    <property type="entry name" value="OB-fold_nuc-bd_dom"/>
</dbReference>
<dbReference type="NCBIfam" id="TIGR00237">
    <property type="entry name" value="xseA"/>
    <property type="match status" value="1"/>
</dbReference>
<dbReference type="PANTHER" id="PTHR30008">
    <property type="entry name" value="EXODEOXYRIBONUCLEASE 7 LARGE SUBUNIT"/>
    <property type="match status" value="1"/>
</dbReference>
<dbReference type="PANTHER" id="PTHR30008:SF0">
    <property type="entry name" value="EXODEOXYRIBONUCLEASE 7 LARGE SUBUNIT"/>
    <property type="match status" value="1"/>
</dbReference>
<dbReference type="Pfam" id="PF02601">
    <property type="entry name" value="Exonuc_VII_L"/>
    <property type="match status" value="2"/>
</dbReference>
<dbReference type="Pfam" id="PF13742">
    <property type="entry name" value="tRNA_anti_2"/>
    <property type="match status" value="1"/>
</dbReference>
<name>EX7L_RHIJ3</name>
<comment type="function">
    <text evidence="1">Bidirectionally degrades single-stranded DNA into large acid-insoluble oligonucleotides, which are then degraded further into small acid-soluble oligonucleotides.</text>
</comment>
<comment type="catalytic activity">
    <reaction evidence="1">
        <text>Exonucleolytic cleavage in either 5'- to 3'- or 3'- to 5'-direction to yield nucleoside 5'-phosphates.</text>
        <dbReference type="EC" id="3.1.11.6"/>
    </reaction>
</comment>
<comment type="subunit">
    <text evidence="1">Heterooligomer composed of large and small subunits.</text>
</comment>
<comment type="subcellular location">
    <subcellularLocation>
        <location evidence="1">Cytoplasm</location>
    </subcellularLocation>
</comment>
<comment type="similarity">
    <text evidence="1">Belongs to the XseA family.</text>
</comment>
<organism>
    <name type="scientific">Rhizobium johnstonii (strain DSM 114642 / LMG 32736 / 3841)</name>
    <name type="common">Rhizobium leguminosarum bv. viciae</name>
    <dbReference type="NCBI Taxonomy" id="216596"/>
    <lineage>
        <taxon>Bacteria</taxon>
        <taxon>Pseudomonadati</taxon>
        <taxon>Pseudomonadota</taxon>
        <taxon>Alphaproteobacteria</taxon>
        <taxon>Hyphomicrobiales</taxon>
        <taxon>Rhizobiaceae</taxon>
        <taxon>Rhizobium/Agrobacterium group</taxon>
        <taxon>Rhizobium</taxon>
        <taxon>Rhizobium johnstonii</taxon>
    </lineage>
</organism>
<feature type="chain" id="PRO_0000303813" description="Exodeoxyribonuclease 7 large subunit">
    <location>
        <begin position="1"/>
        <end position="526"/>
    </location>
</feature>
<feature type="region of interest" description="Disordered" evidence="2">
    <location>
        <begin position="497"/>
        <end position="526"/>
    </location>
</feature>
<keyword id="KW-0963">Cytoplasm</keyword>
<keyword id="KW-0269">Exonuclease</keyword>
<keyword id="KW-0378">Hydrolase</keyword>
<keyword id="KW-0540">Nuclease</keyword>
<proteinExistence type="inferred from homology"/>
<accession>Q1MMN0</accession>
<evidence type="ECO:0000255" key="1">
    <source>
        <dbReference type="HAMAP-Rule" id="MF_00378"/>
    </source>
</evidence>
<evidence type="ECO:0000256" key="2">
    <source>
        <dbReference type="SAM" id="MobiDB-lite"/>
    </source>
</evidence>
<sequence>MSNVFDGDSPTNLAEYSVSELSGSIKRTVETAFDQVRVRGEISGYRGPHSSGHAYFALKDDRARIDAVIWKGTFSRLKFRPEEGMEVIATGKVTTFPGSSKYQIVIETLEPAGAGALMALIEERKRKLGAEGLFDAARKKRLPFMPGVIGVVTSPTGAVIRDILHRISDRFPVHVLVWPVKVQGEGSGEEVANAIRGFNALEPSGTIPRPDVLIVARGGGSLEDLWSFNDEIVVRAAAESAIPLISAVGHETDWTLIDYAADVRAPTPTGAAEMAVPVKAELEAQAAGLAARLQGCMNRQMDQRRQSVRALMRALPSLDQLLALPRRRFDEAATGLGRGLELNTINKRRGFERVAAHLRPDLLAGRIAERRQTLNERMARAERMVERLIDRSKSRVDRAEAILASLPARLKTQTDRGRERLGNLSRHADTAVRHQLTRARSELSAQDRVLQSLSYKNVLKRGYAVIRDEDNRPVSQAAHLSAGMGIAIEFADGRVGAMTTEGGTPPAGAKKRSTKPAEPPKQGSLF</sequence>
<reference key="1">
    <citation type="journal article" date="2006" name="Genome Biol.">
        <title>The genome of Rhizobium leguminosarum has recognizable core and accessory components.</title>
        <authorList>
            <person name="Young J.P.W."/>
            <person name="Crossman L.C."/>
            <person name="Johnston A.W.B."/>
            <person name="Thomson N.R."/>
            <person name="Ghazoui Z.F."/>
            <person name="Hull K.H."/>
            <person name="Wexler M."/>
            <person name="Curson A.R.J."/>
            <person name="Todd J.D."/>
            <person name="Poole P.S."/>
            <person name="Mauchline T.H."/>
            <person name="East A.K."/>
            <person name="Quail M.A."/>
            <person name="Churcher C."/>
            <person name="Arrowsmith C."/>
            <person name="Cherevach I."/>
            <person name="Chillingworth T."/>
            <person name="Clarke K."/>
            <person name="Cronin A."/>
            <person name="Davis P."/>
            <person name="Fraser A."/>
            <person name="Hance Z."/>
            <person name="Hauser H."/>
            <person name="Jagels K."/>
            <person name="Moule S."/>
            <person name="Mungall K."/>
            <person name="Norbertczak H."/>
            <person name="Rabbinowitsch E."/>
            <person name="Sanders M."/>
            <person name="Simmonds M."/>
            <person name="Whitehead S."/>
            <person name="Parkhill J."/>
        </authorList>
    </citation>
    <scope>NUCLEOTIDE SEQUENCE [LARGE SCALE GENOMIC DNA]</scope>
    <source>
        <strain>DSM 114642 / LMG 32736 / 3841</strain>
    </source>
</reference>